<organism>
    <name type="scientific">Homo sapiens</name>
    <name type="common">Human</name>
    <dbReference type="NCBI Taxonomy" id="9606"/>
    <lineage>
        <taxon>Eukaryota</taxon>
        <taxon>Metazoa</taxon>
        <taxon>Chordata</taxon>
        <taxon>Craniata</taxon>
        <taxon>Vertebrata</taxon>
        <taxon>Euteleostomi</taxon>
        <taxon>Mammalia</taxon>
        <taxon>Eutheria</taxon>
        <taxon>Euarchontoglires</taxon>
        <taxon>Primates</taxon>
        <taxon>Haplorrhini</taxon>
        <taxon>Catarrhini</taxon>
        <taxon>Hominidae</taxon>
        <taxon>Homo</taxon>
    </lineage>
</organism>
<accession>P11169</accession>
<accession>B2R606</accession>
<accession>D3DUU6</accession>
<accession>Q6I9U2</accession>
<accession>Q9UG15</accession>
<evidence type="ECO:0000250" key="1">
    <source>
        <dbReference type="UniProtKB" id="P32037"/>
    </source>
</evidence>
<evidence type="ECO:0000250" key="2">
    <source>
        <dbReference type="UniProtKB" id="Q07647"/>
    </source>
</evidence>
<evidence type="ECO:0000255" key="3"/>
<evidence type="ECO:0000269" key="4">
    <source>
    </source>
</evidence>
<evidence type="ECO:0000269" key="5">
    <source>
    </source>
</evidence>
<evidence type="ECO:0000269" key="6">
    <source>
    </source>
</evidence>
<evidence type="ECO:0000269" key="7">
    <source>
    </source>
</evidence>
<evidence type="ECO:0000269" key="8">
    <source>
    </source>
</evidence>
<evidence type="ECO:0000269" key="9">
    <source>
    </source>
</evidence>
<evidence type="ECO:0000303" key="10">
    <source>
    </source>
</evidence>
<evidence type="ECO:0000305" key="11"/>
<evidence type="ECO:0000305" key="12">
    <source>
    </source>
</evidence>
<evidence type="ECO:0000312" key="13">
    <source>
        <dbReference type="HGNC" id="HGNC:11007"/>
    </source>
</evidence>
<evidence type="ECO:0007744" key="14">
    <source>
        <dbReference type="PDB" id="4ZW9"/>
    </source>
</evidence>
<evidence type="ECO:0007744" key="15">
    <source>
        <dbReference type="PDB" id="4ZWB"/>
    </source>
</evidence>
<evidence type="ECO:0007744" key="16">
    <source>
        <dbReference type="PDB" id="4ZWC"/>
    </source>
</evidence>
<evidence type="ECO:0007829" key="17">
    <source>
        <dbReference type="PDB" id="4ZW9"/>
    </source>
</evidence>
<evidence type="ECO:0007829" key="18">
    <source>
        <dbReference type="PDB" id="4ZWC"/>
    </source>
</evidence>
<evidence type="ECO:0007829" key="19">
    <source>
        <dbReference type="PDB" id="5C65"/>
    </source>
</evidence>
<proteinExistence type="evidence at protein level"/>
<sequence length="496" mass="53924">MGTQKVTPALIFAITVATIGSFQFGYNTGVINAPEKIIKEFINKTLTDKGNAPPSEVLLTSLWSLSVAIFSVGGMIGSFSVGLFVNRFGRRNSMLIVNLLAVTGGCFMGLCKVAKSVEMLILGRLVIGLFCGLCTGFVPMYIGEISPTALRGAFGTLNQLGIVVGILVAQIFGLEFILGSEELWPLLLGFTILPAILQSAALPFCPESPRFLLINRKEEENAKQILQRLWGTQDVSQDIQEMKDESARMSQEKQVTVLELFRVSSYRQPIIISIVLQLSQQLSGINAVFYYSTGIFKDAGVQEPIYATIGAGVVNTIFTVVSLFLVERAGRRTLHMIGLGGMAFCSTLMTVSLLLKDNYNGMSFVCIGAILVFVAFFEIGPGPIPWFIVAELFSQGPRPAAMAVAGCSNWTSNFLVGLLFPSAAHYLGAYVFIIFTGFLITFLAFTFFKVPETRGRTFEDITRAFEGQAHGADRSGKDGVMEMNSIEPAKETTTNV</sequence>
<keyword id="KW-0002">3D-structure</keyword>
<keyword id="KW-1003">Cell membrane</keyword>
<keyword id="KW-0966">Cell projection</keyword>
<keyword id="KW-0325">Glycoprotein</keyword>
<keyword id="KW-0472">Membrane</keyword>
<keyword id="KW-0597">Phosphoprotein</keyword>
<keyword id="KW-1267">Proteomics identification</keyword>
<keyword id="KW-1185">Reference proteome</keyword>
<keyword id="KW-0762">Sugar transport</keyword>
<keyword id="KW-0812">Transmembrane</keyword>
<keyword id="KW-1133">Transmembrane helix</keyword>
<keyword id="KW-0813">Transport</keyword>
<gene>
    <name evidence="13" type="primary">SLC2A3</name>
    <name evidence="10" type="synonym">GLUT3</name>
</gene>
<comment type="function">
    <text evidence="1 4 6 8 9">Facilitative glucose transporter (PubMed:26176916, PubMed:32860739, PubMed:9477959). Can also mediate the uptake of various other monosaccharides across the cell membrane (PubMed:26176916, PubMed:9477959). Mediates the uptake of glucose, 2-deoxyglucose, galactose, mannose, xylose and fucose, and probably also dehydroascorbate (PubMed:26176916, PubMed:9477959). Does not mediate fructose transport (PubMed:26176916, PubMed:9477959). Required for mesendoderm differentiation (By similarity).</text>
</comment>
<comment type="catalytic activity">
    <reaction evidence="4 6 8 9">
        <text>D-glucose(out) = D-glucose(in)</text>
        <dbReference type="Rhea" id="RHEA:60376"/>
        <dbReference type="ChEBI" id="CHEBI:4167"/>
    </reaction>
</comment>
<comment type="catalytic activity">
    <reaction evidence="8">
        <text>D-galactose(in) = D-galactose(out)</text>
        <dbReference type="Rhea" id="RHEA:34915"/>
        <dbReference type="ChEBI" id="CHEBI:4139"/>
    </reaction>
</comment>
<comment type="activity regulation">
    <text evidence="8">Deoxyglucose transport is inhibited by D-glucose, D-galactose and maltose (PubMed:8457197). Galactose transport is inhibited by D-glucose and maltose (PubMed:8457197).</text>
</comment>
<comment type="biophysicochemical properties">
    <kinetics>
        <KM evidence="8 9">1.4 mM for deoxyglucose</KM>
        <KM evidence="8">8.5 mM for D-galactose</KM>
    </kinetics>
</comment>
<comment type="subunit">
    <text evidence="7">Interacts with SMIM43; the interaction may promote SLC2A3-mediated glucose transport to meet the energy needs of mesendoderm differentiation.</text>
</comment>
<comment type="interaction">
    <interactant intactId="EBI-725116">
        <id>P11169</id>
    </interactant>
    <interactant intactId="EBI-6942903">
        <id>Q96BA8</id>
        <label>CREB3L1</label>
    </interactant>
    <organismsDiffer>false</organismsDiffer>
    <experiments>3</experiments>
</comment>
<comment type="subcellular location">
    <subcellularLocation>
        <location evidence="9 12">Cell membrane</location>
        <topology evidence="4">Multi-pass membrane protein</topology>
    </subcellularLocation>
    <subcellularLocation>
        <location evidence="2">Perikaryon</location>
    </subcellularLocation>
    <subcellularLocation>
        <location evidence="2">Cell projection</location>
    </subcellularLocation>
    <text evidence="2">Localized to densely spaced patches along neuronal processes.</text>
</comment>
<comment type="tissue specificity">
    <text evidence="5 8">Highly expressed in brain (PubMed:8457197). Expressed in many tissues.</text>
</comment>
<comment type="domain">
    <text evidence="12">Transport is mediated via a series of conformation changes, switching between a conformation where the substrate-binding cavity is accessible from the outside, and a another conformation where it is accessible from the cytoplasm.</text>
</comment>
<comment type="similarity">
    <text evidence="11">Belongs to the major facilitator superfamily. Sugar transporter (TC 2.A.1.1) family. Glucose transporter subfamily.</text>
</comment>
<name>GTR3_HUMAN</name>
<protein>
    <recommendedName>
        <fullName evidence="11">Solute carrier family 2, facilitated glucose transporter member 3</fullName>
    </recommendedName>
    <alternativeName>
        <fullName evidence="10">Glucose transporter type 3, brain</fullName>
        <shortName evidence="10">GLUT-3</shortName>
    </alternativeName>
</protein>
<dbReference type="EMBL" id="M20681">
    <property type="protein sequence ID" value="AAB61083.1"/>
    <property type="molecule type" value="mRNA"/>
</dbReference>
<dbReference type="EMBL" id="AF274892">
    <property type="protein sequence ID" value="AAF82116.1"/>
    <property type="molecule type" value="Genomic_DNA"/>
</dbReference>
<dbReference type="EMBL" id="AF274889">
    <property type="protein sequence ID" value="AAF82116.1"/>
    <property type="status" value="JOINED"/>
    <property type="molecule type" value="Genomic_DNA"/>
</dbReference>
<dbReference type="EMBL" id="AF274890">
    <property type="protein sequence ID" value="AAF82116.1"/>
    <property type="status" value="JOINED"/>
    <property type="molecule type" value="Genomic_DNA"/>
</dbReference>
<dbReference type="EMBL" id="AF274891">
    <property type="protein sequence ID" value="AAF82116.1"/>
    <property type="status" value="JOINED"/>
    <property type="molecule type" value="Genomic_DNA"/>
</dbReference>
<dbReference type="EMBL" id="CR457413">
    <property type="protein sequence ID" value="CAG33694.1"/>
    <property type="molecule type" value="mRNA"/>
</dbReference>
<dbReference type="EMBL" id="AK312386">
    <property type="protein sequence ID" value="BAG35303.1"/>
    <property type="molecule type" value="mRNA"/>
</dbReference>
<dbReference type="EMBL" id="CH471116">
    <property type="protein sequence ID" value="EAW88644.1"/>
    <property type="molecule type" value="Genomic_DNA"/>
</dbReference>
<dbReference type="EMBL" id="CH471116">
    <property type="protein sequence ID" value="EAW88645.1"/>
    <property type="molecule type" value="Genomic_DNA"/>
</dbReference>
<dbReference type="EMBL" id="BC039196">
    <property type="protein sequence ID" value="AAH39196.1"/>
    <property type="molecule type" value="mRNA"/>
</dbReference>
<dbReference type="EMBL" id="AY034634">
    <property type="protein sequence ID" value="AAK56796.1"/>
    <property type="molecule type" value="mRNA"/>
</dbReference>
<dbReference type="CCDS" id="CCDS8586.1"/>
<dbReference type="PIR" id="A31986">
    <property type="entry name" value="A31986"/>
</dbReference>
<dbReference type="PIR" id="T14798">
    <property type="entry name" value="T14798"/>
</dbReference>
<dbReference type="RefSeq" id="NP_008862.1">
    <property type="nucleotide sequence ID" value="NM_006931.3"/>
</dbReference>
<dbReference type="PDB" id="4ZW9">
    <property type="method" value="X-ray"/>
    <property type="resolution" value="1.50 A"/>
    <property type="chains" value="A=1-496"/>
</dbReference>
<dbReference type="PDB" id="4ZWB">
    <property type="method" value="X-ray"/>
    <property type="resolution" value="2.40 A"/>
    <property type="chains" value="A=1-496"/>
</dbReference>
<dbReference type="PDB" id="4ZWC">
    <property type="method" value="X-ray"/>
    <property type="resolution" value="2.60 A"/>
    <property type="chains" value="A/B=1-496"/>
</dbReference>
<dbReference type="PDB" id="5C65">
    <property type="method" value="X-ray"/>
    <property type="resolution" value="2.65 A"/>
    <property type="chains" value="A/B=1-474"/>
</dbReference>
<dbReference type="PDB" id="7CRZ">
    <property type="method" value="X-ray"/>
    <property type="resolution" value="2.30 A"/>
    <property type="chains" value="A=1-496"/>
</dbReference>
<dbReference type="PDB" id="7SPS">
    <property type="method" value="X-ray"/>
    <property type="resolution" value="2.30 A"/>
    <property type="chains" value="A/B=1-496"/>
</dbReference>
<dbReference type="PDB" id="7SPT">
    <property type="method" value="X-ray"/>
    <property type="resolution" value="2.10 A"/>
    <property type="chains" value="A=1-496"/>
</dbReference>
<dbReference type="PDBsum" id="4ZW9"/>
<dbReference type="PDBsum" id="4ZWB"/>
<dbReference type="PDBsum" id="4ZWC"/>
<dbReference type="PDBsum" id="5C65"/>
<dbReference type="PDBsum" id="7CRZ"/>
<dbReference type="PDBsum" id="7SPS"/>
<dbReference type="PDBsum" id="7SPT"/>
<dbReference type="SMR" id="P11169"/>
<dbReference type="BioGRID" id="112406">
    <property type="interactions" value="29"/>
</dbReference>
<dbReference type="FunCoup" id="P11169">
    <property type="interactions" value="588"/>
</dbReference>
<dbReference type="IntAct" id="P11169">
    <property type="interactions" value="16"/>
</dbReference>
<dbReference type="MINT" id="P11169"/>
<dbReference type="STRING" id="9606.ENSP00000075120"/>
<dbReference type="BindingDB" id="P11169"/>
<dbReference type="ChEMBL" id="CHEMBL5215"/>
<dbReference type="DrugBank" id="DB00126">
    <property type="generic name" value="Ascorbic acid"/>
</dbReference>
<dbReference type="DrugBank" id="DB01914">
    <property type="generic name" value="D-glucose"/>
</dbReference>
<dbReference type="DrugBank" id="DB09341">
    <property type="generic name" value="Dextrose, unspecified form"/>
</dbReference>
<dbReference type="DrugBank" id="DB09502">
    <property type="generic name" value="Fludeoxyglucose (18F)"/>
</dbReference>
<dbReference type="DrugBank" id="DB01296">
    <property type="generic name" value="Glucosamine"/>
</dbReference>
<dbReference type="TCDB" id="2.A.1.1.91">
    <property type="family name" value="the major facilitator superfamily (mfs)"/>
</dbReference>
<dbReference type="GlyCosmos" id="P11169">
    <property type="glycosylation" value="1 site, No reported glycans"/>
</dbReference>
<dbReference type="GlyGen" id="P11169">
    <property type="glycosylation" value="2 sites, 1 O-linked glycan (1 site)"/>
</dbReference>
<dbReference type="iPTMnet" id="P11169"/>
<dbReference type="PhosphoSitePlus" id="P11169"/>
<dbReference type="SwissPalm" id="P11169"/>
<dbReference type="BioMuta" id="SLC2A3"/>
<dbReference type="DMDM" id="121760"/>
<dbReference type="jPOST" id="P11169"/>
<dbReference type="MassIVE" id="P11169"/>
<dbReference type="PaxDb" id="9606-ENSP00000075120"/>
<dbReference type="PeptideAtlas" id="P11169"/>
<dbReference type="ProteomicsDB" id="52705"/>
<dbReference type="Pumba" id="P11169"/>
<dbReference type="Antibodypedia" id="1472">
    <property type="antibodies" value="338 antibodies from 39 providers"/>
</dbReference>
<dbReference type="DNASU" id="6515"/>
<dbReference type="Ensembl" id="ENST00000075120.12">
    <property type="protein sequence ID" value="ENSP00000075120.7"/>
    <property type="gene ID" value="ENSG00000059804.18"/>
</dbReference>
<dbReference type="Ensembl" id="ENST00000707174.1">
    <property type="protein sequence ID" value="ENSP00000516774.1"/>
    <property type="gene ID" value="ENSG00000059804.18"/>
</dbReference>
<dbReference type="Ensembl" id="ENST00000715759.1">
    <property type="protein sequence ID" value="ENSP00000520516.1"/>
    <property type="gene ID" value="ENSG00000059804.18"/>
</dbReference>
<dbReference type="GeneID" id="6515"/>
<dbReference type="KEGG" id="hsa:6515"/>
<dbReference type="MANE-Select" id="ENST00000075120.12">
    <property type="protein sequence ID" value="ENSP00000075120.7"/>
    <property type="RefSeq nucleotide sequence ID" value="NM_006931.3"/>
    <property type="RefSeq protein sequence ID" value="NP_008862.1"/>
</dbReference>
<dbReference type="UCSC" id="uc001qtr.4">
    <property type="organism name" value="human"/>
</dbReference>
<dbReference type="AGR" id="HGNC:11007"/>
<dbReference type="CTD" id="6515"/>
<dbReference type="DisGeNET" id="6515"/>
<dbReference type="GeneCards" id="SLC2A3"/>
<dbReference type="HGNC" id="HGNC:11007">
    <property type="gene designation" value="SLC2A3"/>
</dbReference>
<dbReference type="HPA" id="ENSG00000059804">
    <property type="expression patterns" value="Tissue enhanced (bone)"/>
</dbReference>
<dbReference type="MalaCards" id="SLC2A3"/>
<dbReference type="MIM" id="138170">
    <property type="type" value="gene"/>
</dbReference>
<dbReference type="neXtProt" id="NX_P11169"/>
<dbReference type="OpenTargets" id="ENSG00000059804"/>
<dbReference type="Orphanet" id="399">
    <property type="disease" value="Huntington disease"/>
</dbReference>
<dbReference type="PharmGKB" id="PA35877"/>
<dbReference type="VEuPathDB" id="HostDB:ENSG00000059804"/>
<dbReference type="eggNOG" id="KOG0569">
    <property type="taxonomic scope" value="Eukaryota"/>
</dbReference>
<dbReference type="GeneTree" id="ENSGT00940000162491"/>
<dbReference type="HOGENOM" id="CLU_001265_30_5_1"/>
<dbReference type="InParanoid" id="P11169"/>
<dbReference type="OMA" id="GVFVYYM"/>
<dbReference type="OrthoDB" id="4540492at2759"/>
<dbReference type="PAN-GO" id="P11169">
    <property type="GO annotations" value="5 GO annotations based on evolutionary models"/>
</dbReference>
<dbReference type="PhylomeDB" id="P11169"/>
<dbReference type="TreeFam" id="TF313762"/>
<dbReference type="PathwayCommons" id="P11169"/>
<dbReference type="Reactome" id="R-HSA-189200">
    <property type="pathway name" value="Cellular hexose transport"/>
</dbReference>
<dbReference type="Reactome" id="R-HSA-196836">
    <property type="pathway name" value="Vitamin C (ascorbate) metabolism"/>
</dbReference>
<dbReference type="Reactome" id="R-HSA-6798695">
    <property type="pathway name" value="Neutrophil degranulation"/>
</dbReference>
<dbReference type="Reactome" id="R-HSA-9022699">
    <property type="pathway name" value="MECP2 regulates neuronal receptors and channels"/>
</dbReference>
<dbReference type="SignaLink" id="P11169"/>
<dbReference type="SIGNOR" id="P11169"/>
<dbReference type="BioGRID-ORCS" id="6515">
    <property type="hits" value="16 hits in 1070 CRISPR screens"/>
</dbReference>
<dbReference type="ChiTaRS" id="SLC2A3">
    <property type="organism name" value="human"/>
</dbReference>
<dbReference type="EvolutionaryTrace" id="P11169"/>
<dbReference type="GenomeRNAi" id="6515"/>
<dbReference type="Pharos" id="P11169">
    <property type="development level" value="Tchem"/>
</dbReference>
<dbReference type="PRO" id="PR:P11169"/>
<dbReference type="Proteomes" id="UP000005640">
    <property type="component" value="Chromosome 12"/>
</dbReference>
<dbReference type="RNAct" id="P11169">
    <property type="molecule type" value="protein"/>
</dbReference>
<dbReference type="Bgee" id="ENSG00000059804">
    <property type="expression patterns" value="Expressed in endothelial cell and 198 other cell types or tissues"/>
</dbReference>
<dbReference type="ExpressionAtlas" id="P11169">
    <property type="expression patterns" value="baseline and differential"/>
</dbReference>
<dbReference type="GO" id="GO:0016235">
    <property type="term" value="C:aggresome"/>
    <property type="evidence" value="ECO:0000314"/>
    <property type="project" value="HPA"/>
</dbReference>
<dbReference type="GO" id="GO:0042995">
    <property type="term" value="C:cell projection"/>
    <property type="evidence" value="ECO:0007669"/>
    <property type="project" value="UniProtKB-SubCell"/>
</dbReference>
<dbReference type="GO" id="GO:0070062">
    <property type="term" value="C:extracellular exosome"/>
    <property type="evidence" value="ECO:0007005"/>
    <property type="project" value="UniProtKB"/>
</dbReference>
<dbReference type="GO" id="GO:0101003">
    <property type="term" value="C:ficolin-1-rich granule membrane"/>
    <property type="evidence" value="ECO:0000304"/>
    <property type="project" value="Reactome"/>
</dbReference>
<dbReference type="GO" id="GO:0016020">
    <property type="term" value="C:membrane"/>
    <property type="evidence" value="ECO:0000314"/>
    <property type="project" value="UniProtKB"/>
</dbReference>
<dbReference type="GO" id="GO:0043204">
    <property type="term" value="C:perikaryon"/>
    <property type="evidence" value="ECO:0007669"/>
    <property type="project" value="UniProtKB-SubCell"/>
</dbReference>
<dbReference type="GO" id="GO:0005886">
    <property type="term" value="C:plasma membrane"/>
    <property type="evidence" value="ECO:0000314"/>
    <property type="project" value="HPA"/>
</dbReference>
<dbReference type="GO" id="GO:0030667">
    <property type="term" value="C:secretory granule membrane"/>
    <property type="evidence" value="ECO:0000304"/>
    <property type="project" value="Reactome"/>
</dbReference>
<dbReference type="GO" id="GO:0035579">
    <property type="term" value="C:specific granule membrane"/>
    <property type="evidence" value="ECO:0000304"/>
    <property type="project" value="Reactome"/>
</dbReference>
<dbReference type="GO" id="GO:0070821">
    <property type="term" value="C:tertiary granule membrane"/>
    <property type="evidence" value="ECO:0000304"/>
    <property type="project" value="Reactome"/>
</dbReference>
<dbReference type="GO" id="GO:0005536">
    <property type="term" value="F:D-glucose binding"/>
    <property type="evidence" value="ECO:0000314"/>
    <property type="project" value="UniProtKB"/>
</dbReference>
<dbReference type="GO" id="GO:0055056">
    <property type="term" value="F:D-glucose transmembrane transporter activity"/>
    <property type="evidence" value="ECO:0000314"/>
    <property type="project" value="UniProtKB"/>
</dbReference>
<dbReference type="GO" id="GO:0033300">
    <property type="term" value="F:dehydroascorbic acid transmembrane transporter activity"/>
    <property type="evidence" value="ECO:0000269"/>
    <property type="project" value="Reactome"/>
</dbReference>
<dbReference type="GO" id="GO:0005354">
    <property type="term" value="F:galactose transmembrane transporter activity"/>
    <property type="evidence" value="ECO:0000314"/>
    <property type="project" value="UniProtKB"/>
</dbReference>
<dbReference type="GO" id="GO:0005975">
    <property type="term" value="P:carbohydrate metabolic process"/>
    <property type="evidence" value="ECO:0000303"/>
    <property type="project" value="ProtInc"/>
</dbReference>
<dbReference type="GO" id="GO:0046323">
    <property type="term" value="P:D-glucose import"/>
    <property type="evidence" value="ECO:0000318"/>
    <property type="project" value="GO_Central"/>
</dbReference>
<dbReference type="GO" id="GO:0098708">
    <property type="term" value="P:D-glucose import across plasma membrane"/>
    <property type="evidence" value="ECO:0000316"/>
    <property type="project" value="ARUK-UCL"/>
</dbReference>
<dbReference type="GO" id="GO:1904659">
    <property type="term" value="P:D-glucose transmembrane transport"/>
    <property type="evidence" value="ECO:0000314"/>
    <property type="project" value="UniProtKB"/>
</dbReference>
<dbReference type="GO" id="GO:0070837">
    <property type="term" value="P:dehydroascorbic acid transport"/>
    <property type="evidence" value="ECO:0000318"/>
    <property type="project" value="GO_Central"/>
</dbReference>
<dbReference type="GO" id="GO:0015757">
    <property type="term" value="P:galactose transmembrane transport"/>
    <property type="evidence" value="ECO:0000314"/>
    <property type="project" value="UniProtKB"/>
</dbReference>
<dbReference type="GO" id="GO:0019852">
    <property type="term" value="P:L-ascorbic acid metabolic process"/>
    <property type="evidence" value="ECO:0000304"/>
    <property type="project" value="Reactome"/>
</dbReference>
<dbReference type="GO" id="GO:0150104">
    <property type="term" value="P:transport across blood-brain barrier"/>
    <property type="evidence" value="ECO:0000316"/>
    <property type="project" value="ARUK-UCL"/>
</dbReference>
<dbReference type="CDD" id="cd17431">
    <property type="entry name" value="MFS_GLUT_Class1"/>
    <property type="match status" value="1"/>
</dbReference>
<dbReference type="FunFam" id="1.20.1250.20:FF:000040">
    <property type="entry name" value="Solute carrier family 2, facilitated glucose transporter member 1"/>
    <property type="match status" value="1"/>
</dbReference>
<dbReference type="Gene3D" id="1.20.1250.20">
    <property type="entry name" value="MFS general substrate transporter like domains"/>
    <property type="match status" value="1"/>
</dbReference>
<dbReference type="InterPro" id="IPR002945">
    <property type="entry name" value="Glc_transpt_3"/>
</dbReference>
<dbReference type="InterPro" id="IPR045263">
    <property type="entry name" value="GLUT"/>
</dbReference>
<dbReference type="InterPro" id="IPR020846">
    <property type="entry name" value="MFS_dom"/>
</dbReference>
<dbReference type="InterPro" id="IPR005828">
    <property type="entry name" value="MFS_sugar_transport-like"/>
</dbReference>
<dbReference type="InterPro" id="IPR036259">
    <property type="entry name" value="MFS_trans_sf"/>
</dbReference>
<dbReference type="InterPro" id="IPR003663">
    <property type="entry name" value="Sugar/inositol_transpt"/>
</dbReference>
<dbReference type="InterPro" id="IPR005829">
    <property type="entry name" value="Sugar_transporter_CS"/>
</dbReference>
<dbReference type="NCBIfam" id="TIGR00879">
    <property type="entry name" value="SP"/>
    <property type="match status" value="1"/>
</dbReference>
<dbReference type="PANTHER" id="PTHR23503">
    <property type="entry name" value="SOLUTE CARRIER FAMILY 2"/>
    <property type="match status" value="1"/>
</dbReference>
<dbReference type="PANTHER" id="PTHR23503:SF99">
    <property type="entry name" value="SOLUTE CARRIER FAMILY 2, FACILITATED GLUCOSE TRANSPORTER MEMBER 3"/>
    <property type="match status" value="1"/>
</dbReference>
<dbReference type="Pfam" id="PF00083">
    <property type="entry name" value="Sugar_tr"/>
    <property type="match status" value="1"/>
</dbReference>
<dbReference type="PRINTS" id="PR01192">
    <property type="entry name" value="GLUCTRSPORT3"/>
</dbReference>
<dbReference type="PRINTS" id="PR00171">
    <property type="entry name" value="SUGRTRNSPORT"/>
</dbReference>
<dbReference type="SUPFAM" id="SSF103473">
    <property type="entry name" value="MFS general substrate transporter"/>
    <property type="match status" value="1"/>
</dbReference>
<dbReference type="PROSITE" id="PS50850">
    <property type="entry name" value="MFS"/>
    <property type="match status" value="1"/>
</dbReference>
<dbReference type="PROSITE" id="PS00216">
    <property type="entry name" value="SUGAR_TRANSPORT_1"/>
    <property type="match status" value="1"/>
</dbReference>
<dbReference type="PROSITE" id="PS00217">
    <property type="entry name" value="SUGAR_TRANSPORT_2"/>
    <property type="match status" value="1"/>
</dbReference>
<feature type="chain" id="PRO_0000050353" description="Solute carrier family 2, facilitated glucose transporter member 3">
    <location>
        <begin position="1"/>
        <end position="496"/>
    </location>
</feature>
<feature type="topological domain" description="Cytoplasmic" evidence="11">
    <location>
        <begin position="1"/>
        <end position="10"/>
    </location>
</feature>
<feature type="transmembrane region" description="Helical; Name=1" evidence="3 4">
    <location>
        <begin position="11"/>
        <end position="32"/>
    </location>
</feature>
<feature type="topological domain" description="Extracellular" evidence="11">
    <location>
        <begin position="33"/>
        <end position="64"/>
    </location>
</feature>
<feature type="transmembrane region" description="Helical; Name=2" evidence="3 4">
    <location>
        <begin position="65"/>
        <end position="85"/>
    </location>
</feature>
<feature type="topological domain" description="Cytoplasmic" evidence="11">
    <location>
        <begin position="86"/>
        <end position="90"/>
    </location>
</feature>
<feature type="transmembrane region" description="Helical; Name=3" evidence="3 4">
    <location>
        <begin position="91"/>
        <end position="111"/>
    </location>
</feature>
<feature type="topological domain" description="Extracellular" evidence="11">
    <location>
        <begin position="112"/>
        <end position="118"/>
    </location>
</feature>
<feature type="transmembrane region" description="Helical; Name=4" evidence="3 4">
    <location>
        <begin position="119"/>
        <end position="142"/>
    </location>
</feature>
<feature type="topological domain" description="Cytoplasmic" evidence="11">
    <location>
        <begin position="143"/>
        <end position="153"/>
    </location>
</feature>
<feature type="transmembrane region" description="Helical; Name=5" evidence="3 4">
    <location>
        <begin position="154"/>
        <end position="174"/>
    </location>
</feature>
<feature type="topological domain" description="Extracellular" evidence="11">
    <location>
        <begin position="175"/>
        <end position="183"/>
    </location>
</feature>
<feature type="transmembrane region" description="Helical; Name=6" evidence="3 4">
    <location>
        <begin position="184"/>
        <end position="204"/>
    </location>
</feature>
<feature type="topological domain" description="Cytoplasmic" evidence="11">
    <location>
        <begin position="205"/>
        <end position="269"/>
    </location>
</feature>
<feature type="transmembrane region" description="Helical; Name=7" evidence="3 4">
    <location>
        <begin position="270"/>
        <end position="290"/>
    </location>
</feature>
<feature type="topological domain" description="Extracellular" evidence="11">
    <location>
        <begin position="291"/>
        <end position="304"/>
    </location>
</feature>
<feature type="transmembrane region" description="Helical; Name=8" evidence="3 4">
    <location>
        <begin position="305"/>
        <end position="325"/>
    </location>
</feature>
<feature type="topological domain" description="Cytoplasmic" evidence="11">
    <location>
        <begin position="326"/>
        <end position="331"/>
    </location>
</feature>
<feature type="transmembrane region" description="Helical; Name=9" evidence="3 4">
    <location>
        <begin position="332"/>
        <end position="352"/>
    </location>
</feature>
<feature type="topological domain" description="Extracellular" evidence="11">
    <location>
        <begin position="353"/>
        <end position="363"/>
    </location>
</feature>
<feature type="transmembrane region" description="Helical; Name=10" evidence="3 4">
    <location>
        <begin position="364"/>
        <end position="389"/>
    </location>
</feature>
<feature type="topological domain" description="Cytoplasmic" evidence="11">
    <location>
        <begin position="390"/>
        <end position="399"/>
    </location>
</feature>
<feature type="transmembrane region" description="Helical; Name=11" evidence="3 4">
    <location>
        <begin position="400"/>
        <end position="420"/>
    </location>
</feature>
<feature type="topological domain" description="Extracellular" evidence="11">
    <location>
        <begin position="421"/>
        <end position="429"/>
    </location>
</feature>
<feature type="transmembrane region" description="Helical; Name=12" evidence="3 4">
    <location>
        <begin position="430"/>
        <end position="450"/>
    </location>
</feature>
<feature type="topological domain" description="Cytoplasmic" evidence="11">
    <location>
        <begin position="451"/>
        <end position="496"/>
    </location>
</feature>
<feature type="region of interest" description="Important for selectivity against fructose" evidence="4">
    <location>
        <begin position="277"/>
        <end position="279"/>
    </location>
</feature>
<feature type="binding site" evidence="4 14">
    <location>
        <position position="159"/>
    </location>
    <ligand>
        <name>D-glucose</name>
        <dbReference type="ChEBI" id="CHEBI:4167"/>
    </ligand>
</feature>
<feature type="binding site" evidence="4 14">
    <location>
        <begin position="280"/>
        <end position="281"/>
    </location>
    <ligand>
        <name>D-glucose</name>
        <dbReference type="ChEBI" id="CHEBI:4167"/>
    </ligand>
</feature>
<feature type="binding site" evidence="4 14">
    <location>
        <position position="286"/>
    </location>
    <ligand>
        <name>D-glucose</name>
        <dbReference type="ChEBI" id="CHEBI:4167"/>
    </ligand>
</feature>
<feature type="binding site" evidence="4 14">
    <location>
        <position position="315"/>
    </location>
    <ligand>
        <name>D-glucose</name>
        <dbReference type="ChEBI" id="CHEBI:4167"/>
    </ligand>
</feature>
<feature type="binding site" evidence="4 14">
    <location>
        <position position="378"/>
    </location>
    <ligand>
        <name>D-glucose</name>
        <dbReference type="ChEBI" id="CHEBI:4167"/>
    </ligand>
</feature>
<feature type="binding site" evidence="4 14">
    <location>
        <position position="386"/>
    </location>
    <ligand>
        <name>D-glucose</name>
        <dbReference type="ChEBI" id="CHEBI:4167"/>
    </ligand>
</feature>
<feature type="modified residue" description="Phosphothreonine" evidence="1">
    <location>
        <position position="232"/>
    </location>
</feature>
<feature type="modified residue" description="Phosphoserine" evidence="1">
    <location>
        <position position="475"/>
    </location>
</feature>
<feature type="modified residue" description="Phosphoserine" evidence="2">
    <location>
        <position position="485"/>
    </location>
</feature>
<feature type="modified residue" description="Phosphothreonine" evidence="2">
    <location>
        <position position="492"/>
    </location>
</feature>
<feature type="glycosylation site" description="N-linked (GlcNAc...) asparagine" evidence="3">
    <location>
        <position position="43"/>
    </location>
</feature>
<feature type="sequence variant" id="VAR_052502" description="In dbSNP:rs17728193.">
    <original>V</original>
    <variation>L</variation>
    <location>
        <position position="85"/>
    </location>
</feature>
<feature type="mutagenesis site" description="Confers moderate fructose transport activity." evidence="4">
    <original>QLS</original>
    <variation>HVA</variation>
    <location>
        <begin position="277"/>
        <end position="279"/>
    </location>
</feature>
<feature type="helix" evidence="17">
    <location>
        <begin position="8"/>
        <end position="29"/>
    </location>
</feature>
<feature type="strand" evidence="18">
    <location>
        <begin position="30"/>
        <end position="32"/>
    </location>
</feature>
<feature type="helix" evidence="17">
    <location>
        <begin position="35"/>
        <end position="48"/>
    </location>
</feature>
<feature type="strand" evidence="19">
    <location>
        <begin position="50"/>
        <end position="52"/>
    </location>
</feature>
<feature type="helix" evidence="17">
    <location>
        <begin position="56"/>
        <end position="79"/>
    </location>
</feature>
<feature type="helix" evidence="17">
    <location>
        <begin position="81"/>
        <end position="88"/>
    </location>
</feature>
<feature type="helix" evidence="17">
    <location>
        <begin position="90"/>
        <end position="96"/>
    </location>
</feature>
<feature type="helix" evidence="17">
    <location>
        <begin position="98"/>
        <end position="110"/>
    </location>
</feature>
<feature type="turn" evidence="17">
    <location>
        <begin position="111"/>
        <end position="115"/>
    </location>
</feature>
<feature type="helix" evidence="17">
    <location>
        <begin position="117"/>
        <end position="145"/>
    </location>
</feature>
<feature type="helix" evidence="17">
    <location>
        <begin position="148"/>
        <end position="150"/>
    </location>
</feature>
<feature type="helix" evidence="17">
    <location>
        <begin position="151"/>
        <end position="173"/>
    </location>
</feature>
<feature type="turn" evidence="17">
    <location>
        <begin position="175"/>
        <end position="178"/>
    </location>
</feature>
<feature type="turn" evidence="17">
    <location>
        <begin position="181"/>
        <end position="183"/>
    </location>
</feature>
<feature type="helix" evidence="17">
    <location>
        <begin position="184"/>
        <end position="189"/>
    </location>
</feature>
<feature type="helix" evidence="17">
    <location>
        <begin position="192"/>
        <end position="201"/>
    </location>
</feature>
<feature type="helix" evidence="17">
    <location>
        <begin position="202"/>
        <end position="204"/>
    </location>
</feature>
<feature type="helix" evidence="17">
    <location>
        <begin position="209"/>
        <end position="214"/>
    </location>
</feature>
<feature type="helix" evidence="17">
    <location>
        <begin position="219"/>
        <end position="230"/>
    </location>
</feature>
<feature type="helix" evidence="17">
    <location>
        <begin position="236"/>
        <end position="251"/>
    </location>
</feature>
<feature type="helix" evidence="17">
    <location>
        <begin position="259"/>
        <end position="262"/>
    </location>
</feature>
<feature type="helix" evidence="17">
    <location>
        <begin position="264"/>
        <end position="281"/>
    </location>
</feature>
<feature type="turn" evidence="17">
    <location>
        <begin position="282"/>
        <end position="284"/>
    </location>
</feature>
<feature type="helix" evidence="17">
    <location>
        <begin position="285"/>
        <end position="299"/>
    </location>
</feature>
<feature type="helix" evidence="17">
    <location>
        <begin position="304"/>
        <end position="355"/>
    </location>
</feature>
<feature type="turn" evidence="17">
    <location>
        <begin position="356"/>
        <end position="358"/>
    </location>
</feature>
<feature type="helix" evidence="17">
    <location>
        <begin position="362"/>
        <end position="379"/>
    </location>
</feature>
<feature type="turn" evidence="17">
    <location>
        <begin position="380"/>
        <end position="382"/>
    </location>
</feature>
<feature type="helix" evidence="17">
    <location>
        <begin position="383"/>
        <end position="391"/>
    </location>
</feature>
<feature type="turn" evidence="17">
    <location>
        <begin position="395"/>
        <end position="397"/>
    </location>
</feature>
<feature type="helix" evidence="17">
    <location>
        <begin position="398"/>
        <end position="427"/>
    </location>
</feature>
<feature type="helix" evidence="17">
    <location>
        <begin position="428"/>
        <end position="430"/>
    </location>
</feature>
<feature type="helix" evidence="17">
    <location>
        <begin position="431"/>
        <end position="449"/>
    </location>
</feature>
<feature type="helix" evidence="17">
    <location>
        <begin position="458"/>
        <end position="469"/>
    </location>
</feature>
<reference key="1">
    <citation type="journal article" date="1988" name="J. Biol. Chem.">
        <title>Evidence for a family of human glucose transporter-like proteins. Sequence and gene localization of a protein expressed in fetal skeletal muscle and other tissues.</title>
        <authorList>
            <person name="Kayano T."/>
            <person name="Fukumoto H."/>
            <person name="Eddy R.L."/>
            <person name="Fan Y.-S."/>
            <person name="Byers M.G."/>
            <person name="Shows T.B."/>
            <person name="Bell G.I."/>
        </authorList>
    </citation>
    <scope>NUCLEOTIDE SEQUENCE [MRNA]</scope>
    <scope>TISSUE SPECIFICITY</scope>
    <source>
        <tissue>Fetal skeletal muscle</tissue>
    </source>
</reference>
<reference key="2">
    <citation type="submission" date="2000-06" db="EMBL/GenBank/DDBJ databases">
        <title>Resistance and expression of glucose transporters in human skeletal muscle.</title>
        <authorList>
            <person name="Stuart C.A."/>
            <person name="Wen K.G."/>
            <person name="Acosta M."/>
            <person name="Wood T.G."/>
        </authorList>
    </citation>
    <scope>NUCLEOTIDE SEQUENCE [GENOMIC DNA]</scope>
</reference>
<reference key="3">
    <citation type="submission" date="2004-06" db="EMBL/GenBank/DDBJ databases">
        <title>Cloning of human full open reading frames in Gateway(TM) system entry vector (pDONR201).</title>
        <authorList>
            <person name="Ebert L."/>
            <person name="Schick M."/>
            <person name="Neubert P."/>
            <person name="Schatten R."/>
            <person name="Henze S."/>
            <person name="Korn B."/>
        </authorList>
    </citation>
    <scope>NUCLEOTIDE SEQUENCE [LARGE SCALE MRNA]</scope>
</reference>
<reference key="4">
    <citation type="journal article" date="2004" name="Nat. Genet.">
        <title>Complete sequencing and characterization of 21,243 full-length human cDNAs.</title>
        <authorList>
            <person name="Ota T."/>
            <person name="Suzuki Y."/>
            <person name="Nishikawa T."/>
            <person name="Otsuki T."/>
            <person name="Sugiyama T."/>
            <person name="Irie R."/>
            <person name="Wakamatsu A."/>
            <person name="Hayashi K."/>
            <person name="Sato H."/>
            <person name="Nagai K."/>
            <person name="Kimura K."/>
            <person name="Makita H."/>
            <person name="Sekine M."/>
            <person name="Obayashi M."/>
            <person name="Nishi T."/>
            <person name="Shibahara T."/>
            <person name="Tanaka T."/>
            <person name="Ishii S."/>
            <person name="Yamamoto J."/>
            <person name="Saito K."/>
            <person name="Kawai Y."/>
            <person name="Isono Y."/>
            <person name="Nakamura Y."/>
            <person name="Nagahari K."/>
            <person name="Murakami K."/>
            <person name="Yasuda T."/>
            <person name="Iwayanagi T."/>
            <person name="Wagatsuma M."/>
            <person name="Shiratori A."/>
            <person name="Sudo H."/>
            <person name="Hosoiri T."/>
            <person name="Kaku Y."/>
            <person name="Kodaira H."/>
            <person name="Kondo H."/>
            <person name="Sugawara M."/>
            <person name="Takahashi M."/>
            <person name="Kanda K."/>
            <person name="Yokoi T."/>
            <person name="Furuya T."/>
            <person name="Kikkawa E."/>
            <person name="Omura Y."/>
            <person name="Abe K."/>
            <person name="Kamihara K."/>
            <person name="Katsuta N."/>
            <person name="Sato K."/>
            <person name="Tanikawa M."/>
            <person name="Yamazaki M."/>
            <person name="Ninomiya K."/>
            <person name="Ishibashi T."/>
            <person name="Yamashita H."/>
            <person name="Murakawa K."/>
            <person name="Fujimori K."/>
            <person name="Tanai H."/>
            <person name="Kimata M."/>
            <person name="Watanabe M."/>
            <person name="Hiraoka S."/>
            <person name="Chiba Y."/>
            <person name="Ishida S."/>
            <person name="Ono Y."/>
            <person name="Takiguchi S."/>
            <person name="Watanabe S."/>
            <person name="Yosida M."/>
            <person name="Hotuta T."/>
            <person name="Kusano J."/>
            <person name="Kanehori K."/>
            <person name="Takahashi-Fujii A."/>
            <person name="Hara H."/>
            <person name="Tanase T.-O."/>
            <person name="Nomura Y."/>
            <person name="Togiya S."/>
            <person name="Komai F."/>
            <person name="Hara R."/>
            <person name="Takeuchi K."/>
            <person name="Arita M."/>
            <person name="Imose N."/>
            <person name="Musashino K."/>
            <person name="Yuuki H."/>
            <person name="Oshima A."/>
            <person name="Sasaki N."/>
            <person name="Aotsuka S."/>
            <person name="Yoshikawa Y."/>
            <person name="Matsunawa H."/>
            <person name="Ichihara T."/>
            <person name="Shiohata N."/>
            <person name="Sano S."/>
            <person name="Moriya S."/>
            <person name="Momiyama H."/>
            <person name="Satoh N."/>
            <person name="Takami S."/>
            <person name="Terashima Y."/>
            <person name="Suzuki O."/>
            <person name="Nakagawa S."/>
            <person name="Senoh A."/>
            <person name="Mizoguchi H."/>
            <person name="Goto Y."/>
            <person name="Shimizu F."/>
            <person name="Wakebe H."/>
            <person name="Hishigaki H."/>
            <person name="Watanabe T."/>
            <person name="Sugiyama A."/>
            <person name="Takemoto M."/>
            <person name="Kawakami B."/>
            <person name="Yamazaki M."/>
            <person name="Watanabe K."/>
            <person name="Kumagai A."/>
            <person name="Itakura S."/>
            <person name="Fukuzumi Y."/>
            <person name="Fujimori Y."/>
            <person name="Komiyama M."/>
            <person name="Tashiro H."/>
            <person name="Tanigami A."/>
            <person name="Fujiwara T."/>
            <person name="Ono T."/>
            <person name="Yamada K."/>
            <person name="Fujii Y."/>
            <person name="Ozaki K."/>
            <person name="Hirao M."/>
            <person name="Ohmori Y."/>
            <person name="Kawabata A."/>
            <person name="Hikiji T."/>
            <person name="Kobatake N."/>
            <person name="Inagaki H."/>
            <person name="Ikema Y."/>
            <person name="Okamoto S."/>
            <person name="Okitani R."/>
            <person name="Kawakami T."/>
            <person name="Noguchi S."/>
            <person name="Itoh T."/>
            <person name="Shigeta K."/>
            <person name="Senba T."/>
            <person name="Matsumura K."/>
            <person name="Nakajima Y."/>
            <person name="Mizuno T."/>
            <person name="Morinaga M."/>
            <person name="Sasaki M."/>
            <person name="Togashi T."/>
            <person name="Oyama M."/>
            <person name="Hata H."/>
            <person name="Watanabe M."/>
            <person name="Komatsu T."/>
            <person name="Mizushima-Sugano J."/>
            <person name="Satoh T."/>
            <person name="Shirai Y."/>
            <person name="Takahashi Y."/>
            <person name="Nakagawa K."/>
            <person name="Okumura K."/>
            <person name="Nagase T."/>
            <person name="Nomura N."/>
            <person name="Kikuchi H."/>
            <person name="Masuho Y."/>
            <person name="Yamashita R."/>
            <person name="Nakai K."/>
            <person name="Yada T."/>
            <person name="Nakamura Y."/>
            <person name="Ohara O."/>
            <person name="Isogai T."/>
            <person name="Sugano S."/>
        </authorList>
    </citation>
    <scope>NUCLEOTIDE SEQUENCE [LARGE SCALE MRNA]</scope>
    <source>
        <tissue>Amygdala</tissue>
    </source>
</reference>
<reference key="5">
    <citation type="submission" date="2005-09" db="EMBL/GenBank/DDBJ databases">
        <authorList>
            <person name="Mural R.J."/>
            <person name="Istrail S."/>
            <person name="Sutton G.G."/>
            <person name="Florea L."/>
            <person name="Halpern A.L."/>
            <person name="Mobarry C.M."/>
            <person name="Lippert R."/>
            <person name="Walenz B."/>
            <person name="Shatkay H."/>
            <person name="Dew I."/>
            <person name="Miller J.R."/>
            <person name="Flanigan M.J."/>
            <person name="Edwards N.J."/>
            <person name="Bolanos R."/>
            <person name="Fasulo D."/>
            <person name="Halldorsson B.V."/>
            <person name="Hannenhalli S."/>
            <person name="Turner R."/>
            <person name="Yooseph S."/>
            <person name="Lu F."/>
            <person name="Nusskern D.R."/>
            <person name="Shue B.C."/>
            <person name="Zheng X.H."/>
            <person name="Zhong F."/>
            <person name="Delcher A.L."/>
            <person name="Huson D.H."/>
            <person name="Kravitz S.A."/>
            <person name="Mouchard L."/>
            <person name="Reinert K."/>
            <person name="Remington K.A."/>
            <person name="Clark A.G."/>
            <person name="Waterman M.S."/>
            <person name="Eichler E.E."/>
            <person name="Adams M.D."/>
            <person name="Hunkapiller M.W."/>
            <person name="Myers E.W."/>
            <person name="Venter J.C."/>
        </authorList>
    </citation>
    <scope>NUCLEOTIDE SEQUENCE [LARGE SCALE GENOMIC DNA]</scope>
</reference>
<reference key="6">
    <citation type="journal article" date="2004" name="Genome Res.">
        <title>The status, quality, and expansion of the NIH full-length cDNA project: the Mammalian Gene Collection (MGC).</title>
        <authorList>
            <consortium name="The MGC Project Team"/>
        </authorList>
    </citation>
    <scope>NUCLEOTIDE SEQUENCE [LARGE SCALE MRNA]</scope>
    <source>
        <tissue>Duodenum</tissue>
    </source>
</reference>
<reference key="7">
    <citation type="submission" date="2001-05" db="EMBL/GenBank/DDBJ databases">
        <title>Molecular characterization and cloning of glucose transporters in human articular chondrocytes.</title>
        <authorList>
            <person name="Neama G."/>
            <person name="Richardson S."/>
            <person name="Bell S."/>
            <person name="Carter S."/>
            <person name="Mobasheri A."/>
        </authorList>
    </citation>
    <scope>NUCLEOTIDE SEQUENCE [MRNA] OF 302-453</scope>
    <source>
        <tissue>Articular cartilage</tissue>
    </source>
</reference>
<reference key="8">
    <citation type="journal article" date="1993" name="Biochem. J.">
        <title>Kinetic analysis of the liver-type (GLUT2) and brain-type (GLUT3) glucose transporters in Xenopus oocytes: substrate specificities and effects of transport inhibitors.</title>
        <authorList>
            <person name="Colville C.A."/>
            <person name="Seatter M.J."/>
            <person name="Jess T.J."/>
            <person name="Gould G.W."/>
            <person name="Thomas H.M."/>
        </authorList>
    </citation>
    <scope>SUBSTRATE SPECIFICITY</scope>
    <scope>FUNCTION</scope>
    <scope>BIOPHYSICOCHEMICAL PROPERTIES</scope>
    <scope>TRANSPORTER ACTIVITY</scope>
    <scope>ACTIVITY REGULATION</scope>
    <scope>TISSUE SPECIFICITY</scope>
</reference>
<reference key="9">
    <citation type="journal article" date="1998" name="Biochemistry">
        <title>QLS motif in transmembrane helix VII of the glucose transporter family interacts with the C-1 (position) of D-glucose and is involved in substrate selection at the exofacial binding site.</title>
        <authorList>
            <person name="Seatter M.J."/>
            <person name="de la Rue S.A."/>
            <person name="Porter L.M."/>
            <person name="Gould G.W."/>
        </authorList>
    </citation>
    <scope>SUBSTRATE SPECIFICITY</scope>
    <scope>REGION</scope>
    <scope>FUNCTION</scope>
    <scope>TRANSPORTER ACTIVITY</scope>
    <scope>SUBCELLULAR LOCATION</scope>
    <scope>MUTAGENESIS OF 277-GLN--SER-279</scope>
    <scope>BIOPHYSICOCHEMICAL PROPERTIES</scope>
</reference>
<reference key="10">
    <citation type="journal article" date="2020" name="Cell">
        <title>Structural Basis for Blocking Sugar Uptake into the Malaria Parasite Plasmodium falciparum.</title>
        <authorList>
            <person name="Jiang X."/>
            <person name="Yuan Y."/>
            <person name="Huang J."/>
            <person name="Zhang S."/>
            <person name="Luo S."/>
            <person name="Wang N."/>
            <person name="Pu D."/>
            <person name="Zhao N."/>
            <person name="Tang Q."/>
            <person name="Hirata K."/>
            <person name="Yang X."/>
            <person name="Jiao Y."/>
            <person name="Sakata-Kato T."/>
            <person name="Wu J.W."/>
            <person name="Yan C."/>
            <person name="Kato N."/>
            <person name="Yin H."/>
            <person name="Yan N."/>
        </authorList>
    </citation>
    <scope>FUNCTION</scope>
    <scope>TRANSPORTER ACTIVITY</scope>
</reference>
<reference key="11">
    <citation type="journal article" date="2022" name="Nat. Commun.">
        <title>A Nodal enhanced micropeptide NEMEP regulates glucose uptake during mesendoderm differentiation of embryonic stem cells.</title>
        <authorList>
            <person name="Fu H."/>
            <person name="Wang T."/>
            <person name="Kong X."/>
            <person name="Yan K."/>
            <person name="Yang Y."/>
            <person name="Cao J."/>
            <person name="Yuan Y."/>
            <person name="Wang N."/>
            <person name="Kee K."/>
            <person name="Lu Z.J."/>
            <person name="Xi Q."/>
        </authorList>
    </citation>
    <scope>INTERACTION WITH SMIM43</scope>
</reference>
<reference evidence="14 15 16" key="12">
    <citation type="journal article" date="2015" name="Nature">
        <title>Molecular basis of ligand recognition and transport by glucose transporters.</title>
        <authorList>
            <person name="Deng D."/>
            <person name="Sun P."/>
            <person name="Yan C."/>
            <person name="Ke M."/>
            <person name="Jiang X."/>
            <person name="Xiong L."/>
            <person name="Ren W."/>
            <person name="Hirata K."/>
            <person name="Yamamoto M."/>
            <person name="Fan S."/>
            <person name="Yan N."/>
        </authorList>
    </citation>
    <scope>X-RAY CRYSTALLOGRAPHY (1.50 ANGSTROMS) IN COMPLEXES WITH D-GLUCOSE</scope>
    <scope>SUBCELLULAR LOCATION</scope>
    <scope>TOPOLOGY</scope>
    <scope>FUNCTION</scope>
    <scope>TRANSPORTER ACTIVITY</scope>
    <scope>DOMAIN</scope>
</reference>